<gene>
    <name evidence="1" type="primary">glmS</name>
    <name type="ordered locus">R01656</name>
    <name type="ORF">SMc00231</name>
</gene>
<reference key="1">
    <citation type="journal article" date="2001" name="Proc. Natl. Acad. Sci. U.S.A.">
        <title>Analysis of the chromosome sequence of the legume symbiont Sinorhizobium meliloti strain 1021.</title>
        <authorList>
            <person name="Capela D."/>
            <person name="Barloy-Hubler F."/>
            <person name="Gouzy J."/>
            <person name="Bothe G."/>
            <person name="Ampe F."/>
            <person name="Batut J."/>
            <person name="Boistard P."/>
            <person name="Becker A."/>
            <person name="Boutry M."/>
            <person name="Cadieu E."/>
            <person name="Dreano S."/>
            <person name="Gloux S."/>
            <person name="Godrie T."/>
            <person name="Goffeau A."/>
            <person name="Kahn D."/>
            <person name="Kiss E."/>
            <person name="Lelaure V."/>
            <person name="Masuy D."/>
            <person name="Pohl T."/>
            <person name="Portetelle D."/>
            <person name="Puehler A."/>
            <person name="Purnelle B."/>
            <person name="Ramsperger U."/>
            <person name="Renard C."/>
            <person name="Thebault P."/>
            <person name="Vandenbol M."/>
            <person name="Weidner S."/>
            <person name="Galibert F."/>
        </authorList>
    </citation>
    <scope>NUCLEOTIDE SEQUENCE [LARGE SCALE GENOMIC DNA]</scope>
    <source>
        <strain>1021</strain>
    </source>
</reference>
<reference key="2">
    <citation type="journal article" date="2001" name="Science">
        <title>The composite genome of the legume symbiont Sinorhizobium meliloti.</title>
        <authorList>
            <person name="Galibert F."/>
            <person name="Finan T.M."/>
            <person name="Long S.R."/>
            <person name="Puehler A."/>
            <person name="Abola P."/>
            <person name="Ampe F."/>
            <person name="Barloy-Hubler F."/>
            <person name="Barnett M.J."/>
            <person name="Becker A."/>
            <person name="Boistard P."/>
            <person name="Bothe G."/>
            <person name="Boutry M."/>
            <person name="Bowser L."/>
            <person name="Buhrmester J."/>
            <person name="Cadieu E."/>
            <person name="Capela D."/>
            <person name="Chain P."/>
            <person name="Cowie A."/>
            <person name="Davis R.W."/>
            <person name="Dreano S."/>
            <person name="Federspiel N.A."/>
            <person name="Fisher R.F."/>
            <person name="Gloux S."/>
            <person name="Godrie T."/>
            <person name="Goffeau A."/>
            <person name="Golding B."/>
            <person name="Gouzy J."/>
            <person name="Gurjal M."/>
            <person name="Hernandez-Lucas I."/>
            <person name="Hong A."/>
            <person name="Huizar L."/>
            <person name="Hyman R.W."/>
            <person name="Jones T."/>
            <person name="Kahn D."/>
            <person name="Kahn M.L."/>
            <person name="Kalman S."/>
            <person name="Keating D.H."/>
            <person name="Kiss E."/>
            <person name="Komp C."/>
            <person name="Lelaure V."/>
            <person name="Masuy D."/>
            <person name="Palm C."/>
            <person name="Peck M.C."/>
            <person name="Pohl T.M."/>
            <person name="Portetelle D."/>
            <person name="Purnelle B."/>
            <person name="Ramsperger U."/>
            <person name="Surzycki R."/>
            <person name="Thebault P."/>
            <person name="Vandenbol M."/>
            <person name="Vorhoelter F.J."/>
            <person name="Weidner S."/>
            <person name="Wells D.H."/>
            <person name="Wong K."/>
            <person name="Yeh K.-C."/>
            <person name="Batut J."/>
        </authorList>
    </citation>
    <scope>NUCLEOTIDE SEQUENCE [LARGE SCALE GENOMIC DNA]</scope>
    <source>
        <strain>1021</strain>
    </source>
</reference>
<protein>
    <recommendedName>
        <fullName evidence="1">Glutamine--fructose-6-phosphate aminotransferase [isomerizing]</fullName>
        <ecNumber evidence="1">2.6.1.16</ecNumber>
    </recommendedName>
    <alternativeName>
        <fullName evidence="1">D-fructose-6-phosphate amidotransferase</fullName>
    </alternativeName>
    <alternativeName>
        <fullName evidence="1">GFAT</fullName>
    </alternativeName>
    <alternativeName>
        <fullName evidence="1">Glucosamine-6-phosphate synthase</fullName>
    </alternativeName>
    <alternativeName>
        <fullName evidence="1">Hexosephosphate aminotransferase</fullName>
    </alternativeName>
    <alternativeName>
        <fullName evidence="1">L-glutamine--D-fructose-6-phosphate amidotransferase</fullName>
    </alternativeName>
</protein>
<dbReference type="EC" id="2.6.1.16" evidence="1"/>
<dbReference type="EMBL" id="AL591688">
    <property type="protein sequence ID" value="CAC46235.1"/>
    <property type="molecule type" value="Genomic_DNA"/>
</dbReference>
<dbReference type="RefSeq" id="NP_385762.1">
    <property type="nucleotide sequence ID" value="NC_003047.1"/>
</dbReference>
<dbReference type="RefSeq" id="WP_010969375.1">
    <property type="nucleotide sequence ID" value="NC_003047.1"/>
</dbReference>
<dbReference type="SMR" id="Q92PS4"/>
<dbReference type="EnsemblBacteria" id="CAC46235">
    <property type="protein sequence ID" value="CAC46235"/>
    <property type="gene ID" value="SMc00231"/>
</dbReference>
<dbReference type="KEGG" id="sme:SMc00231"/>
<dbReference type="PATRIC" id="fig|266834.11.peg.3089"/>
<dbReference type="eggNOG" id="COG0449">
    <property type="taxonomic scope" value="Bacteria"/>
</dbReference>
<dbReference type="HOGENOM" id="CLU_012520_5_2_5"/>
<dbReference type="OrthoDB" id="9761808at2"/>
<dbReference type="Proteomes" id="UP000001976">
    <property type="component" value="Chromosome"/>
</dbReference>
<dbReference type="GO" id="GO:0005829">
    <property type="term" value="C:cytosol"/>
    <property type="evidence" value="ECO:0007669"/>
    <property type="project" value="TreeGrafter"/>
</dbReference>
<dbReference type="GO" id="GO:0097367">
    <property type="term" value="F:carbohydrate derivative binding"/>
    <property type="evidence" value="ECO:0007669"/>
    <property type="project" value="InterPro"/>
</dbReference>
<dbReference type="GO" id="GO:0004360">
    <property type="term" value="F:glutamine-fructose-6-phosphate transaminase (isomerizing) activity"/>
    <property type="evidence" value="ECO:0007669"/>
    <property type="project" value="UniProtKB-UniRule"/>
</dbReference>
<dbReference type="GO" id="GO:0005975">
    <property type="term" value="P:carbohydrate metabolic process"/>
    <property type="evidence" value="ECO:0007669"/>
    <property type="project" value="UniProtKB-UniRule"/>
</dbReference>
<dbReference type="GO" id="GO:0006002">
    <property type="term" value="P:fructose 6-phosphate metabolic process"/>
    <property type="evidence" value="ECO:0007669"/>
    <property type="project" value="TreeGrafter"/>
</dbReference>
<dbReference type="GO" id="GO:0006487">
    <property type="term" value="P:protein N-linked glycosylation"/>
    <property type="evidence" value="ECO:0007669"/>
    <property type="project" value="TreeGrafter"/>
</dbReference>
<dbReference type="GO" id="GO:0006047">
    <property type="term" value="P:UDP-N-acetylglucosamine metabolic process"/>
    <property type="evidence" value="ECO:0007669"/>
    <property type="project" value="TreeGrafter"/>
</dbReference>
<dbReference type="CDD" id="cd00714">
    <property type="entry name" value="GFAT"/>
    <property type="match status" value="1"/>
</dbReference>
<dbReference type="CDD" id="cd05008">
    <property type="entry name" value="SIS_GlmS_GlmD_1"/>
    <property type="match status" value="1"/>
</dbReference>
<dbReference type="CDD" id="cd05009">
    <property type="entry name" value="SIS_GlmS_GlmD_2"/>
    <property type="match status" value="1"/>
</dbReference>
<dbReference type="FunFam" id="3.40.50.10490:FF:000001">
    <property type="entry name" value="Glutamine--fructose-6-phosphate aminotransferase [isomerizing]"/>
    <property type="match status" value="1"/>
</dbReference>
<dbReference type="FunFam" id="3.40.50.10490:FF:000002">
    <property type="entry name" value="Glutamine--fructose-6-phosphate aminotransferase [isomerizing]"/>
    <property type="match status" value="1"/>
</dbReference>
<dbReference type="FunFam" id="3.60.20.10:FF:000006">
    <property type="entry name" value="Glutamine--fructose-6-phosphate aminotransferase [isomerizing]"/>
    <property type="match status" value="1"/>
</dbReference>
<dbReference type="Gene3D" id="3.40.50.10490">
    <property type="entry name" value="Glucose-6-phosphate isomerase like protein, domain 1"/>
    <property type="match status" value="2"/>
</dbReference>
<dbReference type="Gene3D" id="3.60.20.10">
    <property type="entry name" value="Glutamine Phosphoribosylpyrophosphate, subunit 1, domain 1"/>
    <property type="match status" value="1"/>
</dbReference>
<dbReference type="HAMAP" id="MF_00164">
    <property type="entry name" value="GlmS"/>
    <property type="match status" value="1"/>
</dbReference>
<dbReference type="InterPro" id="IPR017932">
    <property type="entry name" value="GATase_2_dom"/>
</dbReference>
<dbReference type="InterPro" id="IPR005855">
    <property type="entry name" value="GFAT"/>
</dbReference>
<dbReference type="InterPro" id="IPR047084">
    <property type="entry name" value="GFAT_N"/>
</dbReference>
<dbReference type="InterPro" id="IPR035466">
    <property type="entry name" value="GlmS/AgaS_SIS"/>
</dbReference>
<dbReference type="InterPro" id="IPR035490">
    <property type="entry name" value="GlmS/FrlB_SIS"/>
</dbReference>
<dbReference type="InterPro" id="IPR029055">
    <property type="entry name" value="Ntn_hydrolases_N"/>
</dbReference>
<dbReference type="InterPro" id="IPR001347">
    <property type="entry name" value="SIS_dom"/>
</dbReference>
<dbReference type="InterPro" id="IPR046348">
    <property type="entry name" value="SIS_dom_sf"/>
</dbReference>
<dbReference type="NCBIfam" id="TIGR01135">
    <property type="entry name" value="glmS"/>
    <property type="match status" value="1"/>
</dbReference>
<dbReference type="NCBIfam" id="NF001484">
    <property type="entry name" value="PRK00331.1"/>
    <property type="match status" value="1"/>
</dbReference>
<dbReference type="PANTHER" id="PTHR10937">
    <property type="entry name" value="GLUCOSAMINE--FRUCTOSE-6-PHOSPHATE AMINOTRANSFERASE, ISOMERIZING"/>
    <property type="match status" value="1"/>
</dbReference>
<dbReference type="PANTHER" id="PTHR10937:SF0">
    <property type="entry name" value="GLUTAMINE--FRUCTOSE-6-PHOSPHATE TRANSAMINASE (ISOMERIZING)"/>
    <property type="match status" value="1"/>
</dbReference>
<dbReference type="Pfam" id="PF13522">
    <property type="entry name" value="GATase_6"/>
    <property type="match status" value="1"/>
</dbReference>
<dbReference type="Pfam" id="PF01380">
    <property type="entry name" value="SIS"/>
    <property type="match status" value="2"/>
</dbReference>
<dbReference type="SUPFAM" id="SSF56235">
    <property type="entry name" value="N-terminal nucleophile aminohydrolases (Ntn hydrolases)"/>
    <property type="match status" value="1"/>
</dbReference>
<dbReference type="SUPFAM" id="SSF53697">
    <property type="entry name" value="SIS domain"/>
    <property type="match status" value="1"/>
</dbReference>
<dbReference type="PROSITE" id="PS51278">
    <property type="entry name" value="GATASE_TYPE_2"/>
    <property type="match status" value="1"/>
</dbReference>
<dbReference type="PROSITE" id="PS51464">
    <property type="entry name" value="SIS"/>
    <property type="match status" value="2"/>
</dbReference>
<keyword id="KW-0032">Aminotransferase</keyword>
<keyword id="KW-0963">Cytoplasm</keyword>
<keyword id="KW-0315">Glutamine amidotransferase</keyword>
<keyword id="KW-1185">Reference proteome</keyword>
<keyword id="KW-0677">Repeat</keyword>
<keyword id="KW-0808">Transferase</keyword>
<organism>
    <name type="scientific">Rhizobium meliloti (strain 1021)</name>
    <name type="common">Ensifer meliloti</name>
    <name type="synonym">Sinorhizobium meliloti</name>
    <dbReference type="NCBI Taxonomy" id="266834"/>
    <lineage>
        <taxon>Bacteria</taxon>
        <taxon>Pseudomonadati</taxon>
        <taxon>Pseudomonadota</taxon>
        <taxon>Alphaproteobacteria</taxon>
        <taxon>Hyphomicrobiales</taxon>
        <taxon>Rhizobiaceae</taxon>
        <taxon>Sinorhizobium/Ensifer group</taxon>
        <taxon>Sinorhizobium</taxon>
    </lineage>
</organism>
<evidence type="ECO:0000255" key="1">
    <source>
        <dbReference type="HAMAP-Rule" id="MF_00164"/>
    </source>
</evidence>
<comment type="function">
    <text evidence="1">Catalyzes the first step in hexosamine metabolism, converting fructose-6P into glucosamine-6P using glutamine as a nitrogen source.</text>
</comment>
<comment type="catalytic activity">
    <reaction evidence="1">
        <text>D-fructose 6-phosphate + L-glutamine = D-glucosamine 6-phosphate + L-glutamate</text>
        <dbReference type="Rhea" id="RHEA:13237"/>
        <dbReference type="ChEBI" id="CHEBI:29985"/>
        <dbReference type="ChEBI" id="CHEBI:58359"/>
        <dbReference type="ChEBI" id="CHEBI:58725"/>
        <dbReference type="ChEBI" id="CHEBI:61527"/>
        <dbReference type="EC" id="2.6.1.16"/>
    </reaction>
</comment>
<comment type="subunit">
    <text evidence="1">Homodimer.</text>
</comment>
<comment type="subcellular location">
    <subcellularLocation>
        <location evidence="1">Cytoplasm</location>
    </subcellularLocation>
</comment>
<proteinExistence type="inferred from homology"/>
<sequence>MCGIVGIVGNQPVSERLVEALKRLEYRGYDSAGVATIDAGTLQRRRAEGKLVNLESRLREEPLAGTIGIAHTRWATHGAPTERNAHPHFTEGVAVVHNGIIENFAELKDELAAGGAEFQTETDTEVVAHLLAKYRRDGLGRREAMHAMLKRVKGAYALAVLFEDDPSTIMAARNGPPLAIGHGSGEMFLGSDAIALAPFTNEITYLIDGDWAVIGKTGVHIFDFDGNVVERPRQISTAAAFLVDKGNHRHFMEKEIYEQPEVIAHALGHYVNFIENRVVPISDAIDFGKVPSLAISACGTAYLAGLIGKYWFERYARLPVEIDVASEFRYREIPLSPQSAALFISQSGETADTLASLRYCKEHGLKIGAVVNARESTIARESDAVFPILAGPEIGVASTKAFTCQLAVLAALAVGAGKARGTISGEEEQALVKSLAEMPRIMGQVLNSIQPKIESLSRELSKCHDVLYLGRGTSFPLAMEGALKLKEISYIHAEGYAAGELKHGPIALIDENMPVIVIAPHDRFFDKTVSNMQEVAARGGRIILITDEKGAAASKLDTMHTIVLPEVDEIIAPMIFSLPVQLLAYHTAVFMGTDVDQPRNLAKSVTVE</sequence>
<accession>Q92PS4</accession>
<feature type="initiator methionine" description="Removed" evidence="1">
    <location>
        <position position="1"/>
    </location>
</feature>
<feature type="chain" id="PRO_0000135372" description="Glutamine--fructose-6-phosphate aminotransferase [isomerizing]">
    <location>
        <begin position="2"/>
        <end position="608"/>
    </location>
</feature>
<feature type="domain" description="Glutamine amidotransferase type-2" evidence="1">
    <location>
        <begin position="2"/>
        <end position="217"/>
    </location>
</feature>
<feature type="domain" description="SIS 1" evidence="1">
    <location>
        <begin position="281"/>
        <end position="422"/>
    </location>
</feature>
<feature type="domain" description="SIS 2" evidence="1">
    <location>
        <begin position="456"/>
        <end position="598"/>
    </location>
</feature>
<feature type="active site" description="Nucleophile; for GATase activity" evidence="1">
    <location>
        <position position="2"/>
    </location>
</feature>
<feature type="active site" description="For Fru-6P isomerization activity" evidence="1">
    <location>
        <position position="603"/>
    </location>
</feature>
<name>GLMS_RHIME</name>